<evidence type="ECO:0000255" key="1">
    <source>
        <dbReference type="HAMAP-Rule" id="MF_00021"/>
    </source>
</evidence>
<accession>B0K3I5</accession>
<organism>
    <name type="scientific">Thermoanaerobacter sp. (strain X514)</name>
    <dbReference type="NCBI Taxonomy" id="399726"/>
    <lineage>
        <taxon>Bacteria</taxon>
        <taxon>Bacillati</taxon>
        <taxon>Bacillota</taxon>
        <taxon>Clostridia</taxon>
        <taxon>Thermoanaerobacterales</taxon>
        <taxon>Thermoanaerobacteraceae</taxon>
        <taxon>Thermoanaerobacter</taxon>
    </lineage>
</organism>
<protein>
    <recommendedName>
        <fullName evidence="1">Probable tRNA sulfurtransferase</fullName>
        <ecNumber evidence="1">2.8.1.4</ecNumber>
    </recommendedName>
    <alternativeName>
        <fullName evidence="1">Sulfur carrier protein ThiS sulfurtransferase</fullName>
    </alternativeName>
    <alternativeName>
        <fullName evidence="1">Thiamine biosynthesis protein ThiI</fullName>
    </alternativeName>
    <alternativeName>
        <fullName evidence="1">tRNA 4-thiouridine synthase</fullName>
    </alternativeName>
</protein>
<gene>
    <name evidence="1" type="primary">thiI</name>
    <name type="ordered locus">Teth514_2024</name>
</gene>
<proteinExistence type="inferred from homology"/>
<dbReference type="EC" id="2.8.1.4" evidence="1"/>
<dbReference type="EMBL" id="CP000923">
    <property type="protein sequence ID" value="ABY93296.1"/>
    <property type="molecule type" value="Genomic_DNA"/>
</dbReference>
<dbReference type="RefSeq" id="WP_009052559.1">
    <property type="nucleotide sequence ID" value="NC_010320.1"/>
</dbReference>
<dbReference type="SMR" id="B0K3I5"/>
<dbReference type="KEGG" id="tex:Teth514_2024"/>
<dbReference type="HOGENOM" id="CLU_037952_4_0_9"/>
<dbReference type="UniPathway" id="UPA00060"/>
<dbReference type="Proteomes" id="UP000002155">
    <property type="component" value="Chromosome"/>
</dbReference>
<dbReference type="GO" id="GO:0005829">
    <property type="term" value="C:cytosol"/>
    <property type="evidence" value="ECO:0007669"/>
    <property type="project" value="TreeGrafter"/>
</dbReference>
<dbReference type="GO" id="GO:0005524">
    <property type="term" value="F:ATP binding"/>
    <property type="evidence" value="ECO:0007669"/>
    <property type="project" value="UniProtKB-UniRule"/>
</dbReference>
<dbReference type="GO" id="GO:0004810">
    <property type="term" value="F:CCA tRNA nucleotidyltransferase activity"/>
    <property type="evidence" value="ECO:0007669"/>
    <property type="project" value="InterPro"/>
</dbReference>
<dbReference type="GO" id="GO:0000049">
    <property type="term" value="F:tRNA binding"/>
    <property type="evidence" value="ECO:0007669"/>
    <property type="project" value="UniProtKB-UniRule"/>
</dbReference>
<dbReference type="GO" id="GO:0140741">
    <property type="term" value="F:tRNA-uracil-4 sulfurtransferase activity"/>
    <property type="evidence" value="ECO:0007669"/>
    <property type="project" value="UniProtKB-EC"/>
</dbReference>
<dbReference type="GO" id="GO:0009228">
    <property type="term" value="P:thiamine biosynthetic process"/>
    <property type="evidence" value="ECO:0007669"/>
    <property type="project" value="UniProtKB-KW"/>
</dbReference>
<dbReference type="GO" id="GO:0009229">
    <property type="term" value="P:thiamine diphosphate biosynthetic process"/>
    <property type="evidence" value="ECO:0007669"/>
    <property type="project" value="UniProtKB-UniRule"/>
</dbReference>
<dbReference type="GO" id="GO:0052837">
    <property type="term" value="P:thiazole biosynthetic process"/>
    <property type="evidence" value="ECO:0007669"/>
    <property type="project" value="TreeGrafter"/>
</dbReference>
<dbReference type="GO" id="GO:0002937">
    <property type="term" value="P:tRNA 4-thiouridine biosynthesis"/>
    <property type="evidence" value="ECO:0007669"/>
    <property type="project" value="TreeGrafter"/>
</dbReference>
<dbReference type="CDD" id="cd01712">
    <property type="entry name" value="PPase_ThiI"/>
    <property type="match status" value="1"/>
</dbReference>
<dbReference type="CDD" id="cd11716">
    <property type="entry name" value="THUMP_ThiI"/>
    <property type="match status" value="1"/>
</dbReference>
<dbReference type="FunFam" id="3.40.50.620:FF:000053">
    <property type="entry name" value="Probable tRNA sulfurtransferase"/>
    <property type="match status" value="1"/>
</dbReference>
<dbReference type="Gene3D" id="3.30.2130.30">
    <property type="match status" value="1"/>
</dbReference>
<dbReference type="Gene3D" id="3.40.50.620">
    <property type="entry name" value="HUPs"/>
    <property type="match status" value="1"/>
</dbReference>
<dbReference type="HAMAP" id="MF_00021">
    <property type="entry name" value="ThiI"/>
    <property type="match status" value="1"/>
</dbReference>
<dbReference type="InterPro" id="IPR014729">
    <property type="entry name" value="Rossmann-like_a/b/a_fold"/>
</dbReference>
<dbReference type="InterPro" id="IPR020536">
    <property type="entry name" value="ThiI_AANH"/>
</dbReference>
<dbReference type="InterPro" id="IPR054173">
    <property type="entry name" value="ThiI_fer"/>
</dbReference>
<dbReference type="InterPro" id="IPR049961">
    <property type="entry name" value="ThiI_N"/>
</dbReference>
<dbReference type="InterPro" id="IPR004114">
    <property type="entry name" value="THUMP_dom"/>
</dbReference>
<dbReference type="InterPro" id="IPR049962">
    <property type="entry name" value="THUMP_ThiI"/>
</dbReference>
<dbReference type="InterPro" id="IPR003720">
    <property type="entry name" value="tRNA_STrfase"/>
</dbReference>
<dbReference type="InterPro" id="IPR050102">
    <property type="entry name" value="tRNA_sulfurtransferase_ThiI"/>
</dbReference>
<dbReference type="NCBIfam" id="TIGR00342">
    <property type="entry name" value="tRNA uracil 4-sulfurtransferase ThiI"/>
    <property type="match status" value="1"/>
</dbReference>
<dbReference type="PANTHER" id="PTHR43209">
    <property type="entry name" value="TRNA SULFURTRANSFERASE"/>
    <property type="match status" value="1"/>
</dbReference>
<dbReference type="PANTHER" id="PTHR43209:SF1">
    <property type="entry name" value="TRNA SULFURTRANSFERASE"/>
    <property type="match status" value="1"/>
</dbReference>
<dbReference type="Pfam" id="PF02568">
    <property type="entry name" value="ThiI"/>
    <property type="match status" value="1"/>
</dbReference>
<dbReference type="Pfam" id="PF22025">
    <property type="entry name" value="ThiI_fer"/>
    <property type="match status" value="1"/>
</dbReference>
<dbReference type="Pfam" id="PF02926">
    <property type="entry name" value="THUMP"/>
    <property type="match status" value="1"/>
</dbReference>
<dbReference type="SMART" id="SM00981">
    <property type="entry name" value="THUMP"/>
    <property type="match status" value="1"/>
</dbReference>
<dbReference type="SUPFAM" id="SSF52402">
    <property type="entry name" value="Adenine nucleotide alpha hydrolases-like"/>
    <property type="match status" value="1"/>
</dbReference>
<dbReference type="SUPFAM" id="SSF143437">
    <property type="entry name" value="THUMP domain-like"/>
    <property type="match status" value="1"/>
</dbReference>
<dbReference type="PROSITE" id="PS51165">
    <property type="entry name" value="THUMP"/>
    <property type="match status" value="1"/>
</dbReference>
<feature type="chain" id="PRO_1000090042" description="Probable tRNA sulfurtransferase">
    <location>
        <begin position="1"/>
        <end position="380"/>
    </location>
</feature>
<feature type="domain" description="THUMP" evidence="1">
    <location>
        <begin position="58"/>
        <end position="162"/>
    </location>
</feature>
<feature type="binding site" evidence="1">
    <location>
        <begin position="178"/>
        <end position="179"/>
    </location>
    <ligand>
        <name>ATP</name>
        <dbReference type="ChEBI" id="CHEBI:30616"/>
    </ligand>
</feature>
<feature type="binding site" evidence="1">
    <location>
        <begin position="203"/>
        <end position="204"/>
    </location>
    <ligand>
        <name>ATP</name>
        <dbReference type="ChEBI" id="CHEBI:30616"/>
    </ligand>
</feature>
<feature type="binding site" evidence="1">
    <location>
        <position position="260"/>
    </location>
    <ligand>
        <name>ATP</name>
        <dbReference type="ChEBI" id="CHEBI:30616"/>
    </ligand>
</feature>
<feature type="binding site" evidence="1">
    <location>
        <position position="282"/>
    </location>
    <ligand>
        <name>ATP</name>
        <dbReference type="ChEBI" id="CHEBI:30616"/>
    </ligand>
</feature>
<feature type="binding site" evidence="1">
    <location>
        <position position="291"/>
    </location>
    <ligand>
        <name>ATP</name>
        <dbReference type="ChEBI" id="CHEBI:30616"/>
    </ligand>
</feature>
<reference key="1">
    <citation type="submission" date="2008-01" db="EMBL/GenBank/DDBJ databases">
        <title>Complete sequence of Thermoanaerobacter sp. X514.</title>
        <authorList>
            <consortium name="US DOE Joint Genome Institute"/>
            <person name="Copeland A."/>
            <person name="Lucas S."/>
            <person name="Lapidus A."/>
            <person name="Barry K."/>
            <person name="Glavina del Rio T."/>
            <person name="Dalin E."/>
            <person name="Tice H."/>
            <person name="Pitluck S."/>
            <person name="Bruce D."/>
            <person name="Goodwin L."/>
            <person name="Saunders E."/>
            <person name="Brettin T."/>
            <person name="Detter J.C."/>
            <person name="Han C."/>
            <person name="Schmutz J."/>
            <person name="Larimer F."/>
            <person name="Land M."/>
            <person name="Hauser L."/>
            <person name="Kyrpides N."/>
            <person name="Kim E."/>
            <person name="Hemme C."/>
            <person name="Fields M.W."/>
            <person name="He Z."/>
            <person name="Zhou J."/>
            <person name="Richardson P."/>
        </authorList>
    </citation>
    <scope>NUCLEOTIDE SEQUENCE [LARGE SCALE GENOMIC DNA]</scope>
    <source>
        <strain>X514</strain>
    </source>
</reference>
<name>THII_THEPX</name>
<sequence length="380" mass="42952">MQDILLIKYGELALKGDNRSFFENKLIKNIKHALSDFKEVKVEKTHGRIYVECDGDIEEVIERLKKVFGIVGITKAKKTDLNLDEIFKAAVELMKGHEGKTFKVETKRPNKSFPYNSMEVSRRVGAAVLKNVKNLKVDVHNPDVLLNVEIREMAFVYAGVIEGIGGLPLGTNGKATVLLSGGIDSPVAAWMMMKRGVEVEAVYFHSPPYTSERAKDKVVDLCKVLSQYGQRIKLHVVHFTDLQLEIYEKCPPKFTTIIMRRMMMKIAEKIAQKNGSMALITGESLGQVASQTIESLYVTNASVSMPIFRPLIGMDKTEIIDLAQKISTFEISIRPYEDCCTIFVPKHPATKPKLEKVIEAEQKMEYQKYIDNFEEEVIEV</sequence>
<keyword id="KW-0067">ATP-binding</keyword>
<keyword id="KW-0963">Cytoplasm</keyword>
<keyword id="KW-0547">Nucleotide-binding</keyword>
<keyword id="KW-0694">RNA-binding</keyword>
<keyword id="KW-0784">Thiamine biosynthesis</keyword>
<keyword id="KW-0808">Transferase</keyword>
<keyword id="KW-0820">tRNA-binding</keyword>
<comment type="function">
    <text evidence="1">Catalyzes the ATP-dependent transfer of a sulfur to tRNA to produce 4-thiouridine in position 8 of tRNAs, which functions as a near-UV photosensor. Also catalyzes the transfer of sulfur to the sulfur carrier protein ThiS, forming ThiS-thiocarboxylate. This is a step in the synthesis of thiazole, in the thiamine biosynthesis pathway. The sulfur is donated as persulfide by IscS.</text>
</comment>
<comment type="catalytic activity">
    <reaction evidence="1">
        <text>[ThiI sulfur-carrier protein]-S-sulfanyl-L-cysteine + a uridine in tRNA + 2 reduced [2Fe-2S]-[ferredoxin] + ATP + H(+) = [ThiI sulfur-carrier protein]-L-cysteine + a 4-thiouridine in tRNA + 2 oxidized [2Fe-2S]-[ferredoxin] + AMP + diphosphate</text>
        <dbReference type="Rhea" id="RHEA:24176"/>
        <dbReference type="Rhea" id="RHEA-COMP:10000"/>
        <dbReference type="Rhea" id="RHEA-COMP:10001"/>
        <dbReference type="Rhea" id="RHEA-COMP:13337"/>
        <dbReference type="Rhea" id="RHEA-COMP:13338"/>
        <dbReference type="Rhea" id="RHEA-COMP:13339"/>
        <dbReference type="Rhea" id="RHEA-COMP:13340"/>
        <dbReference type="ChEBI" id="CHEBI:15378"/>
        <dbReference type="ChEBI" id="CHEBI:29950"/>
        <dbReference type="ChEBI" id="CHEBI:30616"/>
        <dbReference type="ChEBI" id="CHEBI:33019"/>
        <dbReference type="ChEBI" id="CHEBI:33737"/>
        <dbReference type="ChEBI" id="CHEBI:33738"/>
        <dbReference type="ChEBI" id="CHEBI:61963"/>
        <dbReference type="ChEBI" id="CHEBI:65315"/>
        <dbReference type="ChEBI" id="CHEBI:136798"/>
        <dbReference type="ChEBI" id="CHEBI:456215"/>
        <dbReference type="EC" id="2.8.1.4"/>
    </reaction>
</comment>
<comment type="catalytic activity">
    <reaction evidence="1">
        <text>[ThiS sulfur-carrier protein]-C-terminal Gly-Gly-AMP + S-sulfanyl-L-cysteinyl-[cysteine desulfurase] + AH2 = [ThiS sulfur-carrier protein]-C-terminal-Gly-aminoethanethioate + L-cysteinyl-[cysteine desulfurase] + A + AMP + 2 H(+)</text>
        <dbReference type="Rhea" id="RHEA:43340"/>
        <dbReference type="Rhea" id="RHEA-COMP:12157"/>
        <dbReference type="Rhea" id="RHEA-COMP:12158"/>
        <dbReference type="Rhea" id="RHEA-COMP:12910"/>
        <dbReference type="Rhea" id="RHEA-COMP:19908"/>
        <dbReference type="ChEBI" id="CHEBI:13193"/>
        <dbReference type="ChEBI" id="CHEBI:15378"/>
        <dbReference type="ChEBI" id="CHEBI:17499"/>
        <dbReference type="ChEBI" id="CHEBI:29950"/>
        <dbReference type="ChEBI" id="CHEBI:61963"/>
        <dbReference type="ChEBI" id="CHEBI:90618"/>
        <dbReference type="ChEBI" id="CHEBI:232372"/>
        <dbReference type="ChEBI" id="CHEBI:456215"/>
    </reaction>
</comment>
<comment type="pathway">
    <text evidence="1">Cofactor biosynthesis; thiamine diphosphate biosynthesis.</text>
</comment>
<comment type="subcellular location">
    <subcellularLocation>
        <location evidence="1">Cytoplasm</location>
    </subcellularLocation>
</comment>
<comment type="similarity">
    <text evidence="1">Belongs to the ThiI family.</text>
</comment>